<sequence length="115" mass="12920">MVSRKAVAALLVVHVAAMLASQTEAFVPIFTYGELQRMQEKERNKGQKKSLSVWQRSGEEGPVDPAEPIREEENEMIKLTAPLEIGMRMNSRQLEKYPATLEGLLSEMLPQHAAK</sequence>
<comment type="function">
    <text>Plays an important role in the regulation of interdigestive gastrointestinal motility and indirectly causes rhythmic contraction of duodenal and colonic smooth muscle.</text>
</comment>
<comment type="interaction">
    <interactant intactId="EBI-18053274">
        <id>P12872</id>
    </interactant>
    <interactant intactId="EBI-6447886">
        <id>Q9Y320</id>
        <label>TMX2</label>
    </interactant>
    <organismsDiffer>false</organismsDiffer>
    <experiments>3</experiments>
</comment>
<comment type="interaction">
    <interactant intactId="EBI-18053274">
        <id>P12872</id>
    </interactant>
    <interactant intactId="EBI-948354">
        <id>Q6DKK2</id>
        <label>TTC19</label>
    </interactant>
    <organismsDiffer>false</organismsDiffer>
    <experiments>3</experiments>
</comment>
<comment type="subcellular location">
    <subcellularLocation>
        <location>Secreted</location>
    </subcellularLocation>
</comment>
<comment type="alternative products">
    <event type="alternative splicing"/>
    <isoform>
        <id>P12872-1</id>
        <name>1</name>
        <sequence type="displayed"/>
    </isoform>
    <isoform>
        <id>P12872-2</id>
        <name>2</name>
        <sequence type="described" ref="VSP_045484"/>
    </isoform>
    <isoform>
        <id>P12872-3</id>
        <name>3</name>
        <sequence type="described" ref="VSP_047653"/>
    </isoform>
</comment>
<comment type="similarity">
    <text evidence="5">Belongs to the motilin family.</text>
</comment>
<comment type="online information" name="Wikipedia">
    <link uri="https://en.wikipedia.org/wiki/Motilin"/>
    <text>Motilin entry</text>
</comment>
<organism>
    <name type="scientific">Homo sapiens</name>
    <name type="common">Human</name>
    <dbReference type="NCBI Taxonomy" id="9606"/>
    <lineage>
        <taxon>Eukaryota</taxon>
        <taxon>Metazoa</taxon>
        <taxon>Chordata</taxon>
        <taxon>Craniata</taxon>
        <taxon>Vertebrata</taxon>
        <taxon>Euteleostomi</taxon>
        <taxon>Mammalia</taxon>
        <taxon>Eutheria</taxon>
        <taxon>Euarchontoglires</taxon>
        <taxon>Primates</taxon>
        <taxon>Haplorrhini</taxon>
        <taxon>Catarrhini</taxon>
        <taxon>Hominidae</taxon>
        <taxon>Homo</taxon>
    </lineage>
</organism>
<reference key="1">
    <citation type="journal article" date="1987" name="FEBS Lett.">
        <title>Sequence of an intestinal cDNA encoding human motilin precursor.</title>
        <authorList>
            <person name="Seino Y."/>
            <person name="Tanaka K."/>
            <person name="Takeda J."/>
            <person name="Takahashi H."/>
            <person name="Mitani T."/>
            <person name="Kurono M."/>
            <person name="Kayano T."/>
            <person name="Koh G."/>
            <person name="Fukumoto H."/>
            <person name="Yano H."/>
            <person name="Fujita J."/>
            <person name="Inagaki N."/>
            <person name="Yamada Y."/>
            <person name="Imura H."/>
        </authorList>
    </citation>
    <scope>NUCLEOTIDE SEQUENCE [MRNA] (ISOFORM 1)</scope>
</reference>
<reference key="2">
    <citation type="journal article" date="1989" name="FEBS Lett.">
        <title>Exon-intron organization, expression, and chromosomal localization of the human motilin gene.</title>
        <authorList>
            <person name="Yano H."/>
            <person name="Seino Y."/>
            <person name="Fujita J."/>
            <person name="Yamada Y."/>
            <person name="Inagaki N."/>
            <person name="Takeda J."/>
            <person name="Bell G.I."/>
            <person name="Eddy R.L."/>
            <person name="Fan Y.-S."/>
            <person name="Byers M.G."/>
            <person name="Shows T.B."/>
            <person name="Imura H."/>
        </authorList>
    </citation>
    <scope>NUCLEOTIDE SEQUENCE [GENOMIC DNA]</scope>
</reference>
<reference key="3">
    <citation type="journal article" date="1989" name="DNA">
        <title>Structure and expression of the human motilin gene.</title>
        <authorList>
            <person name="Daikh D.I."/>
            <person name="Douglass J.O."/>
            <person name="Adelman J.P."/>
        </authorList>
    </citation>
    <scope>NUCLEOTIDE SEQUENCE [GENOMIC DNA]</scope>
</reference>
<reference key="4">
    <citation type="journal article" date="1989" name="Gastroenterology">
        <title>Molecular heterogeneity of human motilin-like immunoreactivity explained by the processing of prepromotilin.</title>
        <authorList>
            <person name="Dea D."/>
            <person name="Boileau G."/>
            <person name="Poitras P."/>
            <person name="Lahaie R.G."/>
        </authorList>
    </citation>
    <scope>NUCLEOTIDE SEQUENCE [MRNA] (ISOFORM 1)</scope>
</reference>
<reference key="5">
    <citation type="journal article" date="2003" name="Nature">
        <title>The DNA sequence and analysis of human chromosome 6.</title>
        <authorList>
            <person name="Mungall A.J."/>
            <person name="Palmer S.A."/>
            <person name="Sims S.K."/>
            <person name="Edwards C.A."/>
            <person name="Ashurst J.L."/>
            <person name="Wilming L."/>
            <person name="Jones M.C."/>
            <person name="Horton R."/>
            <person name="Hunt S.E."/>
            <person name="Scott C.E."/>
            <person name="Gilbert J.G.R."/>
            <person name="Clamp M.E."/>
            <person name="Bethel G."/>
            <person name="Milne S."/>
            <person name="Ainscough R."/>
            <person name="Almeida J.P."/>
            <person name="Ambrose K.D."/>
            <person name="Andrews T.D."/>
            <person name="Ashwell R.I.S."/>
            <person name="Babbage A.K."/>
            <person name="Bagguley C.L."/>
            <person name="Bailey J."/>
            <person name="Banerjee R."/>
            <person name="Barker D.J."/>
            <person name="Barlow K.F."/>
            <person name="Bates K."/>
            <person name="Beare D.M."/>
            <person name="Beasley H."/>
            <person name="Beasley O."/>
            <person name="Bird C.P."/>
            <person name="Blakey S.E."/>
            <person name="Bray-Allen S."/>
            <person name="Brook J."/>
            <person name="Brown A.J."/>
            <person name="Brown J.Y."/>
            <person name="Burford D.C."/>
            <person name="Burrill W."/>
            <person name="Burton J."/>
            <person name="Carder C."/>
            <person name="Carter N.P."/>
            <person name="Chapman J.C."/>
            <person name="Clark S.Y."/>
            <person name="Clark G."/>
            <person name="Clee C.M."/>
            <person name="Clegg S."/>
            <person name="Cobley V."/>
            <person name="Collier R.E."/>
            <person name="Collins J.E."/>
            <person name="Colman L.K."/>
            <person name="Corby N.R."/>
            <person name="Coville G.J."/>
            <person name="Culley K.M."/>
            <person name="Dhami P."/>
            <person name="Davies J."/>
            <person name="Dunn M."/>
            <person name="Earthrowl M.E."/>
            <person name="Ellington A.E."/>
            <person name="Evans K.A."/>
            <person name="Faulkner L."/>
            <person name="Francis M.D."/>
            <person name="Frankish A."/>
            <person name="Frankland J."/>
            <person name="French L."/>
            <person name="Garner P."/>
            <person name="Garnett J."/>
            <person name="Ghori M.J."/>
            <person name="Gilby L.M."/>
            <person name="Gillson C.J."/>
            <person name="Glithero R.J."/>
            <person name="Grafham D.V."/>
            <person name="Grant M."/>
            <person name="Gribble S."/>
            <person name="Griffiths C."/>
            <person name="Griffiths M.N.D."/>
            <person name="Hall R."/>
            <person name="Halls K.S."/>
            <person name="Hammond S."/>
            <person name="Harley J.L."/>
            <person name="Hart E.A."/>
            <person name="Heath P.D."/>
            <person name="Heathcott R."/>
            <person name="Holmes S.J."/>
            <person name="Howden P.J."/>
            <person name="Howe K.L."/>
            <person name="Howell G.R."/>
            <person name="Huckle E."/>
            <person name="Humphray S.J."/>
            <person name="Humphries M.D."/>
            <person name="Hunt A.R."/>
            <person name="Johnson C.M."/>
            <person name="Joy A.A."/>
            <person name="Kay M."/>
            <person name="Keenan S.J."/>
            <person name="Kimberley A.M."/>
            <person name="King A."/>
            <person name="Laird G.K."/>
            <person name="Langford C."/>
            <person name="Lawlor S."/>
            <person name="Leongamornlert D.A."/>
            <person name="Leversha M."/>
            <person name="Lloyd C.R."/>
            <person name="Lloyd D.M."/>
            <person name="Loveland J.E."/>
            <person name="Lovell J."/>
            <person name="Martin S."/>
            <person name="Mashreghi-Mohammadi M."/>
            <person name="Maslen G.L."/>
            <person name="Matthews L."/>
            <person name="McCann O.T."/>
            <person name="McLaren S.J."/>
            <person name="McLay K."/>
            <person name="McMurray A."/>
            <person name="Moore M.J.F."/>
            <person name="Mullikin J.C."/>
            <person name="Niblett D."/>
            <person name="Nickerson T."/>
            <person name="Novik K.L."/>
            <person name="Oliver K."/>
            <person name="Overton-Larty E.K."/>
            <person name="Parker A."/>
            <person name="Patel R."/>
            <person name="Pearce A.V."/>
            <person name="Peck A.I."/>
            <person name="Phillimore B.J.C.T."/>
            <person name="Phillips S."/>
            <person name="Plumb R.W."/>
            <person name="Porter K.M."/>
            <person name="Ramsey Y."/>
            <person name="Ranby S.A."/>
            <person name="Rice C.M."/>
            <person name="Ross M.T."/>
            <person name="Searle S.M."/>
            <person name="Sehra H.K."/>
            <person name="Sheridan E."/>
            <person name="Skuce C.D."/>
            <person name="Smith S."/>
            <person name="Smith M."/>
            <person name="Spraggon L."/>
            <person name="Squares S.L."/>
            <person name="Steward C.A."/>
            <person name="Sycamore N."/>
            <person name="Tamlyn-Hall G."/>
            <person name="Tester J."/>
            <person name="Theaker A.J."/>
            <person name="Thomas D.W."/>
            <person name="Thorpe A."/>
            <person name="Tracey A."/>
            <person name="Tromans A."/>
            <person name="Tubby B."/>
            <person name="Wall M."/>
            <person name="Wallis J.M."/>
            <person name="West A.P."/>
            <person name="White S.S."/>
            <person name="Whitehead S.L."/>
            <person name="Whittaker H."/>
            <person name="Wild A."/>
            <person name="Willey D.J."/>
            <person name="Wilmer T.E."/>
            <person name="Wood J.M."/>
            <person name="Wray P.W."/>
            <person name="Wyatt J.C."/>
            <person name="Young L."/>
            <person name="Younger R.M."/>
            <person name="Bentley D.R."/>
            <person name="Coulson A."/>
            <person name="Durbin R.M."/>
            <person name="Hubbard T."/>
            <person name="Sulston J.E."/>
            <person name="Dunham I."/>
            <person name="Rogers J."/>
            <person name="Beck S."/>
        </authorList>
    </citation>
    <scope>NUCLEOTIDE SEQUENCE [LARGE SCALE GENOMIC DNA]</scope>
</reference>
<reference key="6">
    <citation type="submission" date="2005-07" db="EMBL/GenBank/DDBJ databases">
        <authorList>
            <person name="Mural R.J."/>
            <person name="Istrail S."/>
            <person name="Sutton G.G."/>
            <person name="Florea L."/>
            <person name="Halpern A.L."/>
            <person name="Mobarry C.M."/>
            <person name="Lippert R."/>
            <person name="Walenz B."/>
            <person name="Shatkay H."/>
            <person name="Dew I."/>
            <person name="Miller J.R."/>
            <person name="Flanigan M.J."/>
            <person name="Edwards N.J."/>
            <person name="Bolanos R."/>
            <person name="Fasulo D."/>
            <person name="Halldorsson B.V."/>
            <person name="Hannenhalli S."/>
            <person name="Turner R."/>
            <person name="Yooseph S."/>
            <person name="Lu F."/>
            <person name="Nusskern D.R."/>
            <person name="Shue B.C."/>
            <person name="Zheng X.H."/>
            <person name="Zhong F."/>
            <person name="Delcher A.L."/>
            <person name="Huson D.H."/>
            <person name="Kravitz S.A."/>
            <person name="Mouchard L."/>
            <person name="Reinert K."/>
            <person name="Remington K.A."/>
            <person name="Clark A.G."/>
            <person name="Waterman M.S."/>
            <person name="Eichler E.E."/>
            <person name="Adams M.D."/>
            <person name="Hunkapiller M.W."/>
            <person name="Myers E.W."/>
            <person name="Venter J.C."/>
        </authorList>
    </citation>
    <scope>NUCLEOTIDE SEQUENCE [LARGE SCALE GENOMIC DNA]</scope>
</reference>
<reference key="7">
    <citation type="journal article" date="2004" name="Genome Res.">
        <title>The status, quality, and expansion of the NIH full-length cDNA project: the Mammalian Gene Collection (MGC).</title>
        <authorList>
            <consortium name="The MGC Project Team"/>
        </authorList>
    </citation>
    <scope>NUCLEOTIDE SEQUENCE [LARGE SCALE MRNA] (ISOFORMS 1 AND 2)</scope>
    <scope>VARIANT ALA-15</scope>
    <source>
        <tissue>Brain</tissue>
    </source>
</reference>
<reference key="8">
    <citation type="journal article" date="2004" name="Protein Sci.">
        <title>Signal peptide prediction based on analysis of experimentally verified cleavage sites.</title>
        <authorList>
            <person name="Zhang Z."/>
            <person name="Henzel W.J."/>
        </authorList>
    </citation>
    <scope>PROTEIN SEQUENCE OF 26-40</scope>
</reference>
<reference key="9">
    <citation type="journal article" date="2002" name="J. Biomol. NMR">
        <title>NMR solution structure and dynamics of motilin in isotropic phospholipid bicellar solution.</title>
        <authorList>
            <person name="Andersson A."/>
            <person name="Maler L."/>
        </authorList>
    </citation>
    <scope>STRUCTURE BY NMR OF 26-47</scope>
</reference>
<accession>P12872</accession>
<accession>B7ZLR7</accession>
<accession>E9PDN2</accession>
<accession>J3KN51</accession>
<accession>Q2M1L2</accession>
<accession>Q5T975</accession>
<accession>Q6NSY7</accession>
<name>MOTI_HUMAN</name>
<evidence type="ECO:0000256" key="1">
    <source>
        <dbReference type="SAM" id="MobiDB-lite"/>
    </source>
</evidence>
<evidence type="ECO:0000269" key="2">
    <source>
    </source>
</evidence>
<evidence type="ECO:0000269" key="3">
    <source>
    </source>
</evidence>
<evidence type="ECO:0000303" key="4">
    <source>
    </source>
</evidence>
<evidence type="ECO:0000305" key="5"/>
<evidence type="ECO:0007829" key="6">
    <source>
        <dbReference type="PDB" id="8IBV"/>
    </source>
</evidence>
<keyword id="KW-0002">3D-structure</keyword>
<keyword id="KW-0025">Alternative splicing</keyword>
<keyword id="KW-0165">Cleavage on pair of basic residues</keyword>
<keyword id="KW-0903">Direct protein sequencing</keyword>
<keyword id="KW-0372">Hormone</keyword>
<keyword id="KW-1267">Proteomics identification</keyword>
<keyword id="KW-1185">Reference proteome</keyword>
<keyword id="KW-0964">Secreted</keyword>
<keyword id="KW-0732">Signal</keyword>
<protein>
    <recommendedName>
        <fullName>Promotilin</fullName>
    </recommendedName>
    <component>
        <recommendedName>
            <fullName>Motilin</fullName>
        </recommendedName>
    </component>
    <component>
        <recommendedName>
            <fullName>Motilin-associated peptide</fullName>
            <shortName>MAP</shortName>
        </recommendedName>
    </component>
</protein>
<dbReference type="EMBL" id="Y00695">
    <property type="protein sequence ID" value="CAA68690.1"/>
    <property type="molecule type" value="mRNA"/>
</dbReference>
<dbReference type="EMBL" id="X15393">
    <property type="protein sequence ID" value="CAA33448.1"/>
    <property type="molecule type" value="Genomic_DNA"/>
</dbReference>
<dbReference type="EMBL" id="X15396">
    <property type="protein sequence ID" value="CAA33448.1"/>
    <property type="status" value="JOINED"/>
    <property type="molecule type" value="Genomic_DNA"/>
</dbReference>
<dbReference type="EMBL" id="X15395">
    <property type="protein sequence ID" value="CAA33448.1"/>
    <property type="status" value="JOINED"/>
    <property type="molecule type" value="Genomic_DNA"/>
</dbReference>
<dbReference type="EMBL" id="X15394">
    <property type="protein sequence ID" value="CAA33448.1"/>
    <property type="status" value="JOINED"/>
    <property type="molecule type" value="Genomic_DNA"/>
</dbReference>
<dbReference type="EMBL" id="M30281">
    <property type="protein sequence ID" value="AAA59860.1"/>
    <property type="molecule type" value="Genomic_DNA"/>
</dbReference>
<dbReference type="EMBL" id="M30278">
    <property type="protein sequence ID" value="AAA59860.1"/>
    <property type="status" value="JOINED"/>
    <property type="molecule type" value="Genomic_DNA"/>
</dbReference>
<dbReference type="EMBL" id="M30279">
    <property type="protein sequence ID" value="AAA59860.1"/>
    <property type="status" value="JOINED"/>
    <property type="molecule type" value="Genomic_DNA"/>
</dbReference>
<dbReference type="EMBL" id="M30280">
    <property type="protein sequence ID" value="AAA59860.1"/>
    <property type="status" value="JOINED"/>
    <property type="molecule type" value="Genomic_DNA"/>
</dbReference>
<dbReference type="EMBL" id="AL138889">
    <property type="status" value="NOT_ANNOTATED_CDS"/>
    <property type="molecule type" value="Genomic_DNA"/>
</dbReference>
<dbReference type="EMBL" id="AL158049">
    <property type="status" value="NOT_ANNOTATED_CDS"/>
    <property type="molecule type" value="Genomic_DNA"/>
</dbReference>
<dbReference type="EMBL" id="CH471081">
    <property type="protein sequence ID" value="EAX03752.1"/>
    <property type="molecule type" value="Genomic_DNA"/>
</dbReference>
<dbReference type="EMBL" id="CH471081">
    <property type="protein sequence ID" value="EAX03753.1"/>
    <property type="molecule type" value="Genomic_DNA"/>
</dbReference>
<dbReference type="EMBL" id="BC069675">
    <property type="protein sequence ID" value="AAH69675.1"/>
    <property type="molecule type" value="mRNA"/>
</dbReference>
<dbReference type="EMBL" id="BC112314">
    <property type="protein sequence ID" value="AAI12315.1"/>
    <property type="molecule type" value="mRNA"/>
</dbReference>
<dbReference type="EMBL" id="BC143981">
    <property type="protein sequence ID" value="AAI43982.1"/>
    <property type="molecule type" value="mRNA"/>
</dbReference>
<dbReference type="CCDS" id="CCDS47412.1">
    <molecule id="P12872-3"/>
</dbReference>
<dbReference type="CCDS" id="CCDS4786.1">
    <molecule id="P12872-1"/>
</dbReference>
<dbReference type="CCDS" id="CCDS54993.1">
    <molecule id="P12872-2"/>
</dbReference>
<dbReference type="PIR" id="A33323">
    <property type="entry name" value="A33323"/>
</dbReference>
<dbReference type="RefSeq" id="NP_001035198.1">
    <molecule id="P12872-3"/>
    <property type="nucleotide sequence ID" value="NM_001040109.2"/>
</dbReference>
<dbReference type="RefSeq" id="NP_001171627.1">
    <molecule id="P12872-2"/>
    <property type="nucleotide sequence ID" value="NM_001184698.2"/>
</dbReference>
<dbReference type="RefSeq" id="NP_002409.1">
    <molecule id="P12872-1"/>
    <property type="nucleotide sequence ID" value="NM_002418.3"/>
</dbReference>
<dbReference type="PDB" id="1LBJ">
    <property type="method" value="NMR"/>
    <property type="chains" value="A=26-47"/>
</dbReference>
<dbReference type="PDB" id="8IBV">
    <property type="method" value="EM"/>
    <property type="resolution" value="3.19 A"/>
    <property type="chains" value="C=26-47"/>
</dbReference>
<dbReference type="PDBsum" id="1LBJ"/>
<dbReference type="PDBsum" id="8IBV"/>
<dbReference type="BMRB" id="P12872"/>
<dbReference type="EMDB" id="EMD-35346"/>
<dbReference type="SMR" id="P12872"/>
<dbReference type="BioGRID" id="110441">
    <property type="interactions" value="2"/>
</dbReference>
<dbReference type="FunCoup" id="P12872">
    <property type="interactions" value="439"/>
</dbReference>
<dbReference type="IntAct" id="P12872">
    <property type="interactions" value="2"/>
</dbReference>
<dbReference type="STRING" id="9606.ENSP00000388825"/>
<dbReference type="BindingDB" id="P12872"/>
<dbReference type="ChEMBL" id="CHEMBL5214853"/>
<dbReference type="DrugBank" id="DB05946">
    <property type="generic name" value="KOS-2187"/>
</dbReference>
<dbReference type="iPTMnet" id="P12872"/>
<dbReference type="PhosphoSitePlus" id="P12872"/>
<dbReference type="BioMuta" id="MLN"/>
<dbReference type="DMDM" id="127253"/>
<dbReference type="MassIVE" id="P12872"/>
<dbReference type="PaxDb" id="9606-ENSP00000388825"/>
<dbReference type="PeptideAtlas" id="P12872"/>
<dbReference type="ProteomicsDB" id="19710"/>
<dbReference type="ProteomicsDB" id="52881">
    <molecule id="P12872-1"/>
</dbReference>
<dbReference type="Antibodypedia" id="45691">
    <property type="antibodies" value="217 antibodies from 25 providers"/>
</dbReference>
<dbReference type="DNASU" id="4295"/>
<dbReference type="Ensembl" id="ENST00000266003.9">
    <molecule id="P12872-3"/>
    <property type="protein sequence ID" value="ENSP00000266003.5"/>
    <property type="gene ID" value="ENSG00000096395.11"/>
</dbReference>
<dbReference type="Ensembl" id="ENST00000430124.7">
    <molecule id="P12872-1"/>
    <property type="protein sequence ID" value="ENSP00000388825.2"/>
    <property type="gene ID" value="ENSG00000096395.11"/>
</dbReference>
<dbReference type="Ensembl" id="ENST00000507738.1">
    <molecule id="P12872-2"/>
    <property type="protein sequence ID" value="ENSP00000425467.1"/>
    <property type="gene ID" value="ENSG00000096395.11"/>
</dbReference>
<dbReference type="GeneID" id="4295"/>
<dbReference type="KEGG" id="hsa:4295"/>
<dbReference type="MANE-Select" id="ENST00000430124.7">
    <property type="protein sequence ID" value="ENSP00000388825.2"/>
    <property type="RefSeq nucleotide sequence ID" value="NM_002418.3"/>
    <property type="RefSeq protein sequence ID" value="NP_002409.1"/>
</dbReference>
<dbReference type="UCSC" id="uc003off.2">
    <molecule id="P12872-1"/>
    <property type="organism name" value="human"/>
</dbReference>
<dbReference type="AGR" id="HGNC:7141"/>
<dbReference type="CTD" id="4295"/>
<dbReference type="DisGeNET" id="4295"/>
<dbReference type="GeneCards" id="MLN"/>
<dbReference type="HGNC" id="HGNC:7141">
    <property type="gene designation" value="MLN"/>
</dbReference>
<dbReference type="HPA" id="ENSG00000096395">
    <property type="expression patterns" value="Tissue enriched (intestine)"/>
</dbReference>
<dbReference type="MIM" id="158270">
    <property type="type" value="gene"/>
</dbReference>
<dbReference type="neXtProt" id="NX_P12872"/>
<dbReference type="OpenTargets" id="ENSG00000096395"/>
<dbReference type="PharmGKB" id="PA30856"/>
<dbReference type="VEuPathDB" id="HostDB:ENSG00000096395"/>
<dbReference type="eggNOG" id="ENOG502SS7F">
    <property type="taxonomic scope" value="Eukaryota"/>
</dbReference>
<dbReference type="GeneTree" id="ENSGT00390000000489"/>
<dbReference type="HOGENOM" id="CLU_154278_0_0_1"/>
<dbReference type="InParanoid" id="P12872"/>
<dbReference type="OMA" id="VPIFTHS"/>
<dbReference type="OrthoDB" id="9937685at2759"/>
<dbReference type="PAN-GO" id="P12872">
    <property type="GO annotations" value="1 GO annotation based on evolutionary models"/>
</dbReference>
<dbReference type="PhylomeDB" id="P12872"/>
<dbReference type="TreeFam" id="TF336217"/>
<dbReference type="PathwayCommons" id="P12872"/>
<dbReference type="Reactome" id="R-HSA-375276">
    <property type="pathway name" value="Peptide ligand-binding receptors"/>
</dbReference>
<dbReference type="Reactome" id="R-HSA-416476">
    <property type="pathway name" value="G alpha (q) signalling events"/>
</dbReference>
<dbReference type="SignaLink" id="P12872"/>
<dbReference type="SIGNOR" id="P12872"/>
<dbReference type="BioGRID-ORCS" id="4295">
    <property type="hits" value="11 hits in 1142 CRISPR screens"/>
</dbReference>
<dbReference type="ChiTaRS" id="MLN">
    <property type="organism name" value="human"/>
</dbReference>
<dbReference type="EvolutionaryTrace" id="P12872"/>
<dbReference type="GenomeRNAi" id="4295"/>
<dbReference type="Pharos" id="P12872">
    <property type="development level" value="Tbio"/>
</dbReference>
<dbReference type="PRO" id="PR:P12872"/>
<dbReference type="Proteomes" id="UP000005640">
    <property type="component" value="Chromosome 6"/>
</dbReference>
<dbReference type="RNAct" id="P12872">
    <property type="molecule type" value="protein"/>
</dbReference>
<dbReference type="Bgee" id="ENSG00000096395">
    <property type="expression patterns" value="Expressed in duodenum and 102 other cell types or tissues"/>
</dbReference>
<dbReference type="GO" id="GO:0005576">
    <property type="term" value="C:extracellular region"/>
    <property type="evidence" value="ECO:0000304"/>
    <property type="project" value="Reactome"/>
</dbReference>
<dbReference type="GO" id="GO:0005179">
    <property type="term" value="F:hormone activity"/>
    <property type="evidence" value="ECO:0007669"/>
    <property type="project" value="UniProtKB-KW"/>
</dbReference>
<dbReference type="GO" id="GO:0031788">
    <property type="term" value="F:motilin receptor binding"/>
    <property type="evidence" value="ECO:0000353"/>
    <property type="project" value="GO_Central"/>
</dbReference>
<dbReference type="InterPro" id="IPR006737">
    <property type="entry name" value="Motilin_assoc"/>
</dbReference>
<dbReference type="InterPro" id="IPR006738">
    <property type="entry name" value="Motilin_ghrelin"/>
</dbReference>
<dbReference type="InterPro" id="IPR015662">
    <property type="entry name" value="Promotilin"/>
</dbReference>
<dbReference type="PANTHER" id="PTHR14156">
    <property type="entry name" value="MOTILIN"/>
    <property type="match status" value="1"/>
</dbReference>
<dbReference type="PANTHER" id="PTHR14156:SF0">
    <property type="entry name" value="PROMOTILIN"/>
    <property type="match status" value="1"/>
</dbReference>
<dbReference type="Pfam" id="PF04643">
    <property type="entry name" value="Motilin_assoc"/>
    <property type="match status" value="1"/>
</dbReference>
<dbReference type="Pfam" id="PF04644">
    <property type="entry name" value="Motilin_ghrelin"/>
    <property type="match status" value="1"/>
</dbReference>
<gene>
    <name type="primary">MLN</name>
</gene>
<proteinExistence type="evidence at protein level"/>
<feature type="signal peptide" evidence="2">
    <location>
        <begin position="1"/>
        <end position="25"/>
    </location>
</feature>
<feature type="chain" id="PRO_0000342171" description="Promotilin">
    <location>
        <begin position="26"/>
        <end position="115"/>
    </location>
</feature>
<feature type="peptide" id="PRO_0000019184" description="Motilin">
    <location>
        <begin position="26"/>
        <end position="47"/>
    </location>
</feature>
<feature type="peptide" id="PRO_0000019185" description="Motilin-associated peptide">
    <location>
        <begin position="50"/>
        <end position="115"/>
    </location>
</feature>
<feature type="region of interest" description="Disordered" evidence="1">
    <location>
        <begin position="39"/>
        <end position="72"/>
    </location>
</feature>
<feature type="splice variant" id="VSP_045484" description="In isoform 2." evidence="4">
    <original>SEMLPQHA</original>
    <variation>T</variation>
    <location>
        <begin position="106"/>
        <end position="113"/>
    </location>
</feature>
<feature type="splice variant" id="VSP_047653" description="In isoform 3." evidence="5">
    <original>AK</original>
    <variation>K</variation>
    <location>
        <begin position="114"/>
        <end position="115"/>
    </location>
</feature>
<feature type="sequence variant" id="VAR_020372" description="In dbSNP:rs2281820." evidence="3">
    <original>V</original>
    <variation>A</variation>
    <location>
        <position position="15"/>
    </location>
</feature>
<feature type="helix" evidence="6">
    <location>
        <begin position="32"/>
        <end position="42"/>
    </location>
</feature>